<proteinExistence type="evidence at protein level"/>
<accession>Q3S2Y2</accession>
<feature type="chain" id="PRO_0000418643" description="UDP-N-acetylglucosamine--peptide N-acetylglucosaminyltransferase GtfA subunit">
    <location>
        <begin position="1"/>
        <end position="506"/>
    </location>
</feature>
<feature type="binding site" evidence="1">
    <location>
        <begin position="16"/>
        <end position="19"/>
    </location>
    <ligand>
        <name>UDP</name>
        <dbReference type="ChEBI" id="CHEBI:58223"/>
    </ligand>
</feature>
<feature type="binding site" evidence="1">
    <location>
        <position position="241"/>
    </location>
    <ligand>
        <name>N-acetyl-D-glucosamine</name>
        <dbReference type="ChEBI" id="CHEBI:506227"/>
    </ligand>
</feature>
<feature type="binding site" evidence="1">
    <location>
        <begin position="384"/>
        <end position="385"/>
    </location>
    <ligand>
        <name>UDP</name>
        <dbReference type="ChEBI" id="CHEBI:58223"/>
    </ligand>
</feature>
<feature type="binding site" evidence="1">
    <location>
        <begin position="404"/>
        <end position="407"/>
    </location>
    <ligand>
        <name>N-acetyl-D-glucosamine</name>
        <dbReference type="ChEBI" id="CHEBI:506227"/>
    </ligand>
</feature>
<organism>
    <name type="scientific">Streptococcus agalactiae</name>
    <dbReference type="NCBI Taxonomy" id="1311"/>
    <lineage>
        <taxon>Bacteria</taxon>
        <taxon>Bacillati</taxon>
        <taxon>Bacillota</taxon>
        <taxon>Bacilli</taxon>
        <taxon>Lactobacillales</taxon>
        <taxon>Streptococcaceae</taxon>
        <taxon>Streptococcus</taxon>
    </lineage>
</organism>
<protein>
    <recommendedName>
        <fullName evidence="1">UDP-N-acetylglucosamine--peptide N-acetylglucosaminyltransferase GtfA subunit</fullName>
        <ecNumber evidence="1">2.4.1.-</ecNumber>
    </recommendedName>
    <alternativeName>
        <fullName evidence="3">Glycosyltransferase Gtf1</fullName>
    </alternativeName>
    <alternativeName>
        <fullName evidence="1">Glycosyltransferase GtfA</fullName>
    </alternativeName>
</protein>
<dbReference type="EC" id="2.4.1.-" evidence="1"/>
<dbReference type="EMBL" id="DQ174691">
    <property type="protein sequence ID" value="AAZ95532.1"/>
    <property type="molecule type" value="Genomic_DNA"/>
</dbReference>
<dbReference type="RefSeq" id="WP_000262050.1">
    <property type="nucleotide sequence ID" value="NZ_VYQU01000016.1"/>
</dbReference>
<dbReference type="SMR" id="Q3S2Y2"/>
<dbReference type="CAZy" id="GT4">
    <property type="family name" value="Glycosyltransferase Family 4"/>
</dbReference>
<dbReference type="GeneID" id="66886245"/>
<dbReference type="KEGG" id="sagg:EN73_06800"/>
<dbReference type="PATRIC" id="fig|1311.132.peg.1280"/>
<dbReference type="UniPathway" id="UPA00378"/>
<dbReference type="GO" id="GO:0005737">
    <property type="term" value="C:cytoplasm"/>
    <property type="evidence" value="ECO:0007669"/>
    <property type="project" value="UniProtKB-SubCell"/>
</dbReference>
<dbReference type="GO" id="GO:0005886">
    <property type="term" value="C:plasma membrane"/>
    <property type="evidence" value="ECO:0007669"/>
    <property type="project" value="UniProtKB-SubCell"/>
</dbReference>
<dbReference type="GO" id="GO:0017122">
    <property type="term" value="C:protein N-acetylglucosaminyltransferase complex"/>
    <property type="evidence" value="ECO:0000314"/>
    <property type="project" value="UniProtKB"/>
</dbReference>
<dbReference type="GO" id="GO:0016757">
    <property type="term" value="F:glycosyltransferase activity"/>
    <property type="evidence" value="ECO:0000314"/>
    <property type="project" value="UniProtKB"/>
</dbReference>
<dbReference type="GO" id="GO:0000166">
    <property type="term" value="F:nucleotide binding"/>
    <property type="evidence" value="ECO:0007669"/>
    <property type="project" value="UniProtKB-KW"/>
</dbReference>
<dbReference type="GO" id="GO:0018242">
    <property type="term" value="P:protein O-linked glycosylation via serine"/>
    <property type="evidence" value="ECO:0007669"/>
    <property type="project" value="UniProtKB-UniRule"/>
</dbReference>
<dbReference type="CDD" id="cd04949">
    <property type="entry name" value="GT4_GtfA-like"/>
    <property type="match status" value="1"/>
</dbReference>
<dbReference type="FunFam" id="3.40.50.2000:FF:000196">
    <property type="entry name" value="UDP-N-acetylglucosamine--peptide N-acetylglucosaminyltransferase GtfA subunit"/>
    <property type="match status" value="1"/>
</dbReference>
<dbReference type="FunFam" id="3.40.50.2000:FF:000209">
    <property type="entry name" value="UDP-N-acetylglucosamine--peptide N-acetylglucosaminyltransferase GtfA subunit"/>
    <property type="match status" value="1"/>
</dbReference>
<dbReference type="Gene3D" id="3.40.50.2000">
    <property type="entry name" value="Glycogen Phosphorylase B"/>
    <property type="match status" value="2"/>
</dbReference>
<dbReference type="HAMAP" id="MF_01472">
    <property type="entry name" value="GtfA"/>
    <property type="match status" value="1"/>
</dbReference>
<dbReference type="InterPro" id="IPR001296">
    <property type="entry name" value="Glyco_trans_1"/>
</dbReference>
<dbReference type="InterPro" id="IPR014267">
    <property type="entry name" value="GtfA"/>
</dbReference>
<dbReference type="InterPro" id="IPR054396">
    <property type="entry name" value="GtfA_EBD"/>
</dbReference>
<dbReference type="NCBIfam" id="TIGR02918">
    <property type="entry name" value="accessory Sec system glycosyltransferase GtfA"/>
    <property type="match status" value="1"/>
</dbReference>
<dbReference type="PANTHER" id="PTHR12526">
    <property type="entry name" value="GLYCOSYLTRANSFERASE"/>
    <property type="match status" value="1"/>
</dbReference>
<dbReference type="PANTHER" id="PTHR12526:SF629">
    <property type="entry name" value="TEICHURONIC ACID BIOSYNTHESIS GLYCOSYLTRANSFERASE TUAH-RELATED"/>
    <property type="match status" value="1"/>
</dbReference>
<dbReference type="Pfam" id="PF00534">
    <property type="entry name" value="Glycos_transf_1"/>
    <property type="match status" value="1"/>
</dbReference>
<dbReference type="Pfam" id="PF22145">
    <property type="entry name" value="GtfA_EBD"/>
    <property type="match status" value="1"/>
</dbReference>
<dbReference type="SUPFAM" id="SSF53756">
    <property type="entry name" value="UDP-Glycosyltransferase/glycogen phosphorylase"/>
    <property type="match status" value="1"/>
</dbReference>
<keyword id="KW-1003">Cell membrane</keyword>
<keyword id="KW-0963">Cytoplasm</keyword>
<keyword id="KW-0328">Glycosyltransferase</keyword>
<keyword id="KW-0472">Membrane</keyword>
<keyword id="KW-0547">Nucleotide-binding</keyword>
<keyword id="KW-0808">Transferase</keyword>
<comment type="function">
    <text evidence="2">Required for polymorphic O-glycosylation of the serine-rich repeat protein Srr2. Catalyzes the first step in glycosylation by transferring N-acetylglucosamine from UDP-GlcNAc to serine residues of Srr2. Part of the accessory SecA2/SecY2 system specifically required to export serine-rich repeat proteins, probably Srr2 in this organism. The GtfA-GtfB (Gtf1-Gtf2 in this bacteria) complex adds GlcNAc from UDP-GlcNAc to Srr2 substrate. This subunit has low glycosyltransferase activity; GtfB enhances glycosyltransferase activity in vitro. Upon expression in S.parasanguis GtfA/GtfB restores expression of serine-rich repeat protein Fap1 and complements a biofilm formation defect.</text>
</comment>
<comment type="catalytic activity">
    <reaction evidence="1">
        <text>L-seryl-[protein] + UDP-N-acetyl-alpha-D-glucosamine = 3-O-[N-acetyl-alpha-D-glucosaminyl]-L-seryl-[protein] + UDP + H(+)</text>
        <dbReference type="Rhea" id="RHEA:59872"/>
        <dbReference type="Rhea" id="RHEA-COMP:9863"/>
        <dbReference type="Rhea" id="RHEA-COMP:15471"/>
        <dbReference type="ChEBI" id="CHEBI:15378"/>
        <dbReference type="ChEBI" id="CHEBI:29999"/>
        <dbReference type="ChEBI" id="CHEBI:57705"/>
        <dbReference type="ChEBI" id="CHEBI:58223"/>
        <dbReference type="ChEBI" id="CHEBI:143279"/>
    </reaction>
</comment>
<comment type="pathway">
    <text evidence="1 2">Protein modification; protein glycosylation.</text>
</comment>
<comment type="subunit">
    <text evidence="2">Interacts with stabilizing protein GtfB (Gtf2), probably as a heterotetramer with 2 subunits each of GtfA and GtfB, part of the accessory SecA2/SecY2 protein translocation apparatus.</text>
</comment>
<comment type="subcellular location">
    <subcellularLocation>
        <location evidence="1">Cytoplasm</location>
    </subcellularLocation>
    <subcellularLocation>
        <location evidence="1">Cell membrane</location>
        <topology evidence="1">Peripheral membrane protein</topology>
    </subcellularLocation>
    <text evidence="1">Cell membrane association requires GtfB.</text>
</comment>
<comment type="similarity">
    <text evidence="1 4">Belongs to the glycosyltransferase group 1 family. Glycosyltransferase 4 subfamily.</text>
</comment>
<name>GTFA_STRAG</name>
<evidence type="ECO:0000255" key="1">
    <source>
        <dbReference type="HAMAP-Rule" id="MF_01472"/>
    </source>
</evidence>
<evidence type="ECO:0000269" key="2">
    <source>
    </source>
</evidence>
<evidence type="ECO:0000303" key="3">
    <source>
    </source>
</evidence>
<evidence type="ECO:0000305" key="4"/>
<gene>
    <name evidence="1" type="primary">gtfA</name>
    <name evidence="3" type="synonym">gtf1</name>
</gene>
<reference key="1">
    <citation type="journal article" date="2006" name="Microbiology">
        <title>A unique serine-rich repeat protein (Srr-2) and novel surface antigen (epsilon) associated with a virulent lineage of serotype III Streptococcus agalactiae.</title>
        <authorList>
            <person name="Seifert K.N."/>
            <person name="Adderson E.E."/>
            <person name="Whiting A.A."/>
            <person name="Bohnsack J.F."/>
            <person name="Crowley P.J."/>
            <person name="Brady L.J."/>
        </authorList>
    </citation>
    <scope>NUCLEOTIDE SEQUENCE [GENOMIC DNA]</scope>
    <source>
        <strain>J48</strain>
    </source>
</reference>
<reference key="2">
    <citation type="journal article" date="2011" name="J. Biol. Chem.">
        <title>A molecular chaperone mediates a two-protein enzyme complex and glycosylation of serine-rich streptococcal adhesins.</title>
        <authorList>
            <person name="Wu R."/>
            <person name="Wu H."/>
        </authorList>
    </citation>
    <scope>FUNCTION AS A GLYCOSYLTRANSFERASE</scope>
    <scope>PATHWAY</scope>
    <scope>INTERACTION WITH GTFB (GTF2)</scope>
    <scope>EXPRESSION IN S.PARASANGUIS</scope>
    <source>
        <strain>J48</strain>
    </source>
</reference>
<sequence>MVVYNLNRGIGWASSGVEYAQAYRSEVFRKLGVEAKFIFTDMFQNENIEHLTRNIGFEDNEIIWLYTFFTDLTIAATSYSLQQLKESFSLPIDRTEKNGKIISFFFKGSSIVVTVMLNDESSNIVQRVEYLMGGKLVRKDYYSYTKMFSEYYAPEDIGPCLYQRTFYNEDGSVAYEENVDGENSIFKFKETILYSKEELVGYMLEKLQLTNSDLILLDRSTGIGQAVLRNKGNAKVAVVVHAEHYNVSATDETTILWNNYYDYQFSNADSIDAFITSTETQTKTLIDQFKKYLNIEPVVYTIPVGSLSKLQRKEWHERKAFSLLTCSRLASEKHIDWLINAVVEANKVIPELTFDIYGEGGERQKLQEIIAKNKANNYIRLMGHKNLSSVYKDYQVYLSGSTSEGFGLTLMEAIGSGLPIIGLDVPYGNQTFIENNLNGYLIPRETPDNPQQISTAFAQYIVALFNSKDICKKHEYSYRIASRFLNDKIIENWSFFLRRLLNDYTI</sequence>